<keyword id="KW-1003">Cell membrane</keyword>
<keyword id="KW-1015">Disulfide bond</keyword>
<keyword id="KW-0297">G-protein coupled receptor</keyword>
<keyword id="KW-0325">Glycoprotein</keyword>
<keyword id="KW-0472">Membrane</keyword>
<keyword id="KW-0552">Olfaction</keyword>
<keyword id="KW-0675">Receptor</keyword>
<keyword id="KW-1185">Reference proteome</keyword>
<keyword id="KW-0716">Sensory transduction</keyword>
<keyword id="KW-0807">Transducer</keyword>
<keyword id="KW-0812">Transmembrane</keyword>
<keyword id="KW-1133">Transmembrane helix</keyword>
<name>OR6K2_HUMAN</name>
<gene>
    <name type="primary">OR6K2</name>
</gene>
<feature type="chain" id="PRO_0000150629" description="Olfactory receptor 6K2">
    <location>
        <begin position="1"/>
        <end position="324"/>
    </location>
</feature>
<feature type="topological domain" description="Extracellular" evidence="1">
    <location>
        <begin position="1"/>
        <end position="25"/>
    </location>
</feature>
<feature type="transmembrane region" description="Helical; Name=1" evidence="1">
    <location>
        <begin position="26"/>
        <end position="46"/>
    </location>
</feature>
<feature type="topological domain" description="Cytoplasmic" evidence="1">
    <location>
        <begin position="47"/>
        <end position="54"/>
    </location>
</feature>
<feature type="transmembrane region" description="Helical; Name=2" evidence="1">
    <location>
        <begin position="55"/>
        <end position="75"/>
    </location>
</feature>
<feature type="topological domain" description="Extracellular" evidence="1">
    <location>
        <begin position="76"/>
        <end position="98"/>
    </location>
</feature>
<feature type="transmembrane region" description="Helical; Name=3" evidence="1">
    <location>
        <begin position="99"/>
        <end position="119"/>
    </location>
</feature>
<feature type="topological domain" description="Cytoplasmic" evidence="1">
    <location>
        <begin position="120"/>
        <end position="138"/>
    </location>
</feature>
<feature type="transmembrane region" description="Helical; Name=4" evidence="1">
    <location>
        <begin position="139"/>
        <end position="159"/>
    </location>
</feature>
<feature type="topological domain" description="Extracellular" evidence="1">
    <location>
        <begin position="160"/>
        <end position="198"/>
    </location>
</feature>
<feature type="transmembrane region" description="Helical; Name=5" evidence="1">
    <location>
        <begin position="199"/>
        <end position="218"/>
    </location>
</feature>
<feature type="topological domain" description="Cytoplasmic" evidence="1">
    <location>
        <begin position="219"/>
        <end position="238"/>
    </location>
</feature>
<feature type="transmembrane region" description="Helical; Name=6" evidence="1">
    <location>
        <begin position="239"/>
        <end position="259"/>
    </location>
</feature>
<feature type="topological domain" description="Extracellular" evidence="1">
    <location>
        <begin position="260"/>
        <end position="272"/>
    </location>
</feature>
<feature type="transmembrane region" description="Helical; Name=7" evidence="1">
    <location>
        <begin position="273"/>
        <end position="293"/>
    </location>
</feature>
<feature type="topological domain" description="Cytoplasmic" evidence="1">
    <location>
        <begin position="294"/>
        <end position="324"/>
    </location>
</feature>
<feature type="glycosylation site" description="N-linked (GlcNAc...) asparagine" evidence="1">
    <location>
        <position position="5"/>
    </location>
</feature>
<feature type="disulfide bond" evidence="2">
    <location>
        <begin position="96"/>
        <end position="188"/>
    </location>
</feature>
<feature type="sequence variant" id="VAR_034248" description="In dbSNP:rs413029.">
    <original>R</original>
    <variation>Q</variation>
    <location>
        <position position="6"/>
    </location>
</feature>
<feature type="sequence variant" id="VAR_034249" description="In dbSNP:rs423141.">
    <original>L</original>
    <variation>V</variation>
    <location>
        <position position="156"/>
    </location>
</feature>
<feature type="sequence variant" id="VAR_034250" description="In dbSNP:rs6686179.">
    <original>I</original>
    <variation>F</variation>
    <location>
        <position position="159"/>
    </location>
</feature>
<evidence type="ECO:0000255" key="1"/>
<evidence type="ECO:0000255" key="2">
    <source>
        <dbReference type="PROSITE-ProRule" id="PRU00521"/>
    </source>
</evidence>
<evidence type="ECO:0000305" key="3"/>
<dbReference type="EMBL" id="AB065634">
    <property type="protein sequence ID" value="BAC05860.1"/>
    <property type="molecule type" value="Genomic_DNA"/>
</dbReference>
<dbReference type="EMBL" id="AL513205">
    <property type="status" value="NOT_ANNOTATED_CDS"/>
    <property type="molecule type" value="Genomic_DNA"/>
</dbReference>
<dbReference type="EMBL" id="CH471121">
    <property type="protein sequence ID" value="EAW52815.1"/>
    <property type="molecule type" value="Genomic_DNA"/>
</dbReference>
<dbReference type="EMBL" id="BC137022">
    <property type="protein sequence ID" value="AAI37023.1"/>
    <property type="molecule type" value="mRNA"/>
</dbReference>
<dbReference type="EMBL" id="BC137023">
    <property type="protein sequence ID" value="AAI37024.1"/>
    <property type="molecule type" value="mRNA"/>
</dbReference>
<dbReference type="EMBL" id="BK004196">
    <property type="protein sequence ID" value="DAA04594.1"/>
    <property type="molecule type" value="Genomic_DNA"/>
</dbReference>
<dbReference type="CCDS" id="CCDS30902.1"/>
<dbReference type="RefSeq" id="NP_001005279.1">
    <property type="nucleotide sequence ID" value="NM_001005279.3"/>
</dbReference>
<dbReference type="SMR" id="Q8NGY2"/>
<dbReference type="FunCoup" id="Q8NGY2">
    <property type="interactions" value="417"/>
</dbReference>
<dbReference type="STRING" id="9606.ENSP00000352626"/>
<dbReference type="GlyCosmos" id="Q8NGY2">
    <property type="glycosylation" value="1 site, No reported glycans"/>
</dbReference>
<dbReference type="GlyGen" id="Q8NGY2">
    <property type="glycosylation" value="1 site"/>
</dbReference>
<dbReference type="iPTMnet" id="Q8NGY2"/>
<dbReference type="PhosphoSitePlus" id="Q8NGY2"/>
<dbReference type="BioMuta" id="OR6K2"/>
<dbReference type="DMDM" id="38372786"/>
<dbReference type="PaxDb" id="9606-ENSP00000352626"/>
<dbReference type="Antibodypedia" id="57102">
    <property type="antibodies" value="105 antibodies from 19 providers"/>
</dbReference>
<dbReference type="DNASU" id="81448"/>
<dbReference type="Ensembl" id="ENST00000359610.3">
    <property type="protein sequence ID" value="ENSP00000352626.2"/>
    <property type="gene ID" value="ENSG00000196171.3"/>
</dbReference>
<dbReference type="GeneID" id="81448"/>
<dbReference type="KEGG" id="hsa:81448"/>
<dbReference type="MANE-Select" id="ENST00000359610.3">
    <property type="protein sequence ID" value="ENSP00000352626.2"/>
    <property type="RefSeq nucleotide sequence ID" value="NM_001005279.3"/>
    <property type="RefSeq protein sequence ID" value="NP_001005279.1"/>
</dbReference>
<dbReference type="UCSC" id="uc001fsu.1">
    <property type="organism name" value="human"/>
</dbReference>
<dbReference type="AGR" id="HGNC:15029"/>
<dbReference type="CTD" id="81448"/>
<dbReference type="DisGeNET" id="81448"/>
<dbReference type="GeneCards" id="OR6K2"/>
<dbReference type="HGNC" id="HGNC:15029">
    <property type="gene designation" value="OR6K2"/>
</dbReference>
<dbReference type="HPA" id="ENSG00000196171">
    <property type="expression patterns" value="Not detected"/>
</dbReference>
<dbReference type="MalaCards" id="OR6K2"/>
<dbReference type="neXtProt" id="NX_Q8NGY2"/>
<dbReference type="PharmGKB" id="PA32589"/>
<dbReference type="VEuPathDB" id="HostDB:ENSG00000196171"/>
<dbReference type="eggNOG" id="ENOG502TM1Z">
    <property type="taxonomic scope" value="Eukaryota"/>
</dbReference>
<dbReference type="GeneTree" id="ENSGT00940000163294"/>
<dbReference type="HOGENOM" id="CLU_012526_0_1_1"/>
<dbReference type="InParanoid" id="Q8NGY2"/>
<dbReference type="OMA" id="SCCVCGF"/>
<dbReference type="OrthoDB" id="10017003at2759"/>
<dbReference type="PAN-GO" id="Q8NGY2">
    <property type="GO annotations" value="4 GO annotations based on evolutionary models"/>
</dbReference>
<dbReference type="PhylomeDB" id="Q8NGY2"/>
<dbReference type="TreeFam" id="TF337562"/>
<dbReference type="PathwayCommons" id="Q8NGY2"/>
<dbReference type="Reactome" id="R-HSA-9752946">
    <property type="pathway name" value="Expression and translocation of olfactory receptors"/>
</dbReference>
<dbReference type="BioGRID-ORCS" id="81448">
    <property type="hits" value="13 hits in 748 CRISPR screens"/>
</dbReference>
<dbReference type="GeneWiki" id="OR6K2"/>
<dbReference type="GenomeRNAi" id="81448"/>
<dbReference type="Pharos" id="Q8NGY2">
    <property type="development level" value="Tdark"/>
</dbReference>
<dbReference type="PRO" id="PR:Q8NGY2"/>
<dbReference type="Proteomes" id="UP000005640">
    <property type="component" value="Chromosome 1"/>
</dbReference>
<dbReference type="RNAct" id="Q8NGY2">
    <property type="molecule type" value="protein"/>
</dbReference>
<dbReference type="Bgee" id="ENSG00000196171">
    <property type="expression patterns" value="Expressed in prefrontal cortex and 1 other cell type or tissue"/>
</dbReference>
<dbReference type="ExpressionAtlas" id="Q8NGY2">
    <property type="expression patterns" value="baseline and differential"/>
</dbReference>
<dbReference type="GO" id="GO:0016020">
    <property type="term" value="C:membrane"/>
    <property type="evidence" value="ECO:0000318"/>
    <property type="project" value="GO_Central"/>
</dbReference>
<dbReference type="GO" id="GO:0005886">
    <property type="term" value="C:plasma membrane"/>
    <property type="evidence" value="ECO:0007669"/>
    <property type="project" value="UniProtKB-SubCell"/>
</dbReference>
<dbReference type="GO" id="GO:0004930">
    <property type="term" value="F:G protein-coupled receptor activity"/>
    <property type="evidence" value="ECO:0007669"/>
    <property type="project" value="UniProtKB-KW"/>
</dbReference>
<dbReference type="GO" id="GO:0005549">
    <property type="term" value="F:odorant binding"/>
    <property type="evidence" value="ECO:0000318"/>
    <property type="project" value="GO_Central"/>
</dbReference>
<dbReference type="GO" id="GO:0004984">
    <property type="term" value="F:olfactory receptor activity"/>
    <property type="evidence" value="ECO:0000318"/>
    <property type="project" value="GO_Central"/>
</dbReference>
<dbReference type="GO" id="GO:0050911">
    <property type="term" value="P:detection of chemical stimulus involved in sensory perception of smell"/>
    <property type="evidence" value="ECO:0000318"/>
    <property type="project" value="GO_Central"/>
</dbReference>
<dbReference type="CDD" id="cd15914">
    <property type="entry name" value="7tmA_OR6N-like"/>
    <property type="match status" value="1"/>
</dbReference>
<dbReference type="FunFam" id="1.20.1070.10:FF:000001">
    <property type="entry name" value="Olfactory receptor"/>
    <property type="match status" value="1"/>
</dbReference>
<dbReference type="Gene3D" id="1.20.1070.10">
    <property type="entry name" value="Rhodopsin 7-helix transmembrane proteins"/>
    <property type="match status" value="1"/>
</dbReference>
<dbReference type="InterPro" id="IPR000276">
    <property type="entry name" value="GPCR_Rhodpsn"/>
</dbReference>
<dbReference type="InterPro" id="IPR017452">
    <property type="entry name" value="GPCR_Rhodpsn_7TM"/>
</dbReference>
<dbReference type="InterPro" id="IPR000725">
    <property type="entry name" value="Olfact_rcpt"/>
</dbReference>
<dbReference type="InterPro" id="IPR050939">
    <property type="entry name" value="Olfactory_GPCR1"/>
</dbReference>
<dbReference type="PANTHER" id="PTHR24242">
    <property type="entry name" value="G-PROTEIN COUPLED RECEPTOR"/>
    <property type="match status" value="1"/>
</dbReference>
<dbReference type="PANTHER" id="PTHR24242:SF379">
    <property type="entry name" value="OLFACTORY RECEPTOR"/>
    <property type="match status" value="1"/>
</dbReference>
<dbReference type="Pfam" id="PF13853">
    <property type="entry name" value="7tm_4"/>
    <property type="match status" value="1"/>
</dbReference>
<dbReference type="PRINTS" id="PR00237">
    <property type="entry name" value="GPCRRHODOPSN"/>
</dbReference>
<dbReference type="PRINTS" id="PR00245">
    <property type="entry name" value="OLFACTORYR"/>
</dbReference>
<dbReference type="SUPFAM" id="SSF81321">
    <property type="entry name" value="Family A G protein-coupled receptor-like"/>
    <property type="match status" value="1"/>
</dbReference>
<dbReference type="PROSITE" id="PS50262">
    <property type="entry name" value="G_PROTEIN_RECEP_F1_2"/>
    <property type="match status" value="1"/>
</dbReference>
<protein>
    <recommendedName>
        <fullName>Olfactory receptor 6K2</fullName>
    </recommendedName>
    <alternativeName>
        <fullName>Olfactory receptor OR1-17</fullName>
    </alternativeName>
</protein>
<sequence>MESPNRTTIQEFIFSAFPYSWVKSVVCFVPLLFIYAFIVVGNLVIITVVQLNTHLHTPMYTFISALSFLEIWYTTATIPKMLSSLLSERSISFNGCLLQMYFFHSTGICEVCLLTVMAFDHYLAICSPLHYPSIMTPKLCTQLTLSCCVCGFITPLPEIAWISTLPFCGSNHLEHIFCDFLPVLRLACTDTRAIVMIQVVDVIHAVEIITAVMLIFMSYDGIVAVILRIHSAGGRRTAFSTCVSHFIVFSLFFGSVTLMYLRFSATYSLFWDIAIALAFAVLSPFFNPIIYSLRNKEIKEAIKKHIGQAKIFFSVRPGTSSKIF</sequence>
<reference key="1">
    <citation type="submission" date="2001-07" db="EMBL/GenBank/DDBJ databases">
        <title>Genome-wide discovery and analysis of human seven transmembrane helix receptor genes.</title>
        <authorList>
            <person name="Suwa M."/>
            <person name="Sato T."/>
            <person name="Okouchi I."/>
            <person name="Arita M."/>
            <person name="Futami K."/>
            <person name="Matsumoto S."/>
            <person name="Tsutsumi S."/>
            <person name="Aburatani H."/>
            <person name="Asai K."/>
            <person name="Akiyama Y."/>
        </authorList>
    </citation>
    <scope>NUCLEOTIDE SEQUENCE [GENOMIC DNA]</scope>
</reference>
<reference key="2">
    <citation type="journal article" date="2006" name="Nature">
        <title>The DNA sequence and biological annotation of human chromosome 1.</title>
        <authorList>
            <person name="Gregory S.G."/>
            <person name="Barlow K.F."/>
            <person name="McLay K.E."/>
            <person name="Kaul R."/>
            <person name="Swarbreck D."/>
            <person name="Dunham A."/>
            <person name="Scott C.E."/>
            <person name="Howe K.L."/>
            <person name="Woodfine K."/>
            <person name="Spencer C.C.A."/>
            <person name="Jones M.C."/>
            <person name="Gillson C."/>
            <person name="Searle S."/>
            <person name="Zhou Y."/>
            <person name="Kokocinski F."/>
            <person name="McDonald L."/>
            <person name="Evans R."/>
            <person name="Phillips K."/>
            <person name="Atkinson A."/>
            <person name="Cooper R."/>
            <person name="Jones C."/>
            <person name="Hall R.E."/>
            <person name="Andrews T.D."/>
            <person name="Lloyd C."/>
            <person name="Ainscough R."/>
            <person name="Almeida J.P."/>
            <person name="Ambrose K.D."/>
            <person name="Anderson F."/>
            <person name="Andrew R.W."/>
            <person name="Ashwell R.I.S."/>
            <person name="Aubin K."/>
            <person name="Babbage A.K."/>
            <person name="Bagguley C.L."/>
            <person name="Bailey J."/>
            <person name="Beasley H."/>
            <person name="Bethel G."/>
            <person name="Bird C.P."/>
            <person name="Bray-Allen S."/>
            <person name="Brown J.Y."/>
            <person name="Brown A.J."/>
            <person name="Buckley D."/>
            <person name="Burton J."/>
            <person name="Bye J."/>
            <person name="Carder C."/>
            <person name="Chapman J.C."/>
            <person name="Clark S.Y."/>
            <person name="Clarke G."/>
            <person name="Clee C."/>
            <person name="Cobley V."/>
            <person name="Collier R.E."/>
            <person name="Corby N."/>
            <person name="Coville G.J."/>
            <person name="Davies J."/>
            <person name="Deadman R."/>
            <person name="Dunn M."/>
            <person name="Earthrowl M."/>
            <person name="Ellington A.G."/>
            <person name="Errington H."/>
            <person name="Frankish A."/>
            <person name="Frankland J."/>
            <person name="French L."/>
            <person name="Garner P."/>
            <person name="Garnett J."/>
            <person name="Gay L."/>
            <person name="Ghori M.R.J."/>
            <person name="Gibson R."/>
            <person name="Gilby L.M."/>
            <person name="Gillett W."/>
            <person name="Glithero R.J."/>
            <person name="Grafham D.V."/>
            <person name="Griffiths C."/>
            <person name="Griffiths-Jones S."/>
            <person name="Grocock R."/>
            <person name="Hammond S."/>
            <person name="Harrison E.S.I."/>
            <person name="Hart E."/>
            <person name="Haugen E."/>
            <person name="Heath P.D."/>
            <person name="Holmes S."/>
            <person name="Holt K."/>
            <person name="Howden P.J."/>
            <person name="Hunt A.R."/>
            <person name="Hunt S.E."/>
            <person name="Hunter G."/>
            <person name="Isherwood J."/>
            <person name="James R."/>
            <person name="Johnson C."/>
            <person name="Johnson D."/>
            <person name="Joy A."/>
            <person name="Kay M."/>
            <person name="Kershaw J.K."/>
            <person name="Kibukawa M."/>
            <person name="Kimberley A.M."/>
            <person name="King A."/>
            <person name="Knights A.J."/>
            <person name="Lad H."/>
            <person name="Laird G."/>
            <person name="Lawlor S."/>
            <person name="Leongamornlert D.A."/>
            <person name="Lloyd D.M."/>
            <person name="Loveland J."/>
            <person name="Lovell J."/>
            <person name="Lush M.J."/>
            <person name="Lyne R."/>
            <person name="Martin S."/>
            <person name="Mashreghi-Mohammadi M."/>
            <person name="Matthews L."/>
            <person name="Matthews N.S.W."/>
            <person name="McLaren S."/>
            <person name="Milne S."/>
            <person name="Mistry S."/>
            <person name="Moore M.J.F."/>
            <person name="Nickerson T."/>
            <person name="O'Dell C.N."/>
            <person name="Oliver K."/>
            <person name="Palmeiri A."/>
            <person name="Palmer S.A."/>
            <person name="Parker A."/>
            <person name="Patel D."/>
            <person name="Pearce A.V."/>
            <person name="Peck A.I."/>
            <person name="Pelan S."/>
            <person name="Phelps K."/>
            <person name="Phillimore B.J."/>
            <person name="Plumb R."/>
            <person name="Rajan J."/>
            <person name="Raymond C."/>
            <person name="Rouse G."/>
            <person name="Saenphimmachak C."/>
            <person name="Sehra H.K."/>
            <person name="Sheridan E."/>
            <person name="Shownkeen R."/>
            <person name="Sims S."/>
            <person name="Skuce C.D."/>
            <person name="Smith M."/>
            <person name="Steward C."/>
            <person name="Subramanian S."/>
            <person name="Sycamore N."/>
            <person name="Tracey A."/>
            <person name="Tromans A."/>
            <person name="Van Helmond Z."/>
            <person name="Wall M."/>
            <person name="Wallis J.M."/>
            <person name="White S."/>
            <person name="Whitehead S.L."/>
            <person name="Wilkinson J.E."/>
            <person name="Willey D.L."/>
            <person name="Williams H."/>
            <person name="Wilming L."/>
            <person name="Wray P.W."/>
            <person name="Wu Z."/>
            <person name="Coulson A."/>
            <person name="Vaudin M."/>
            <person name="Sulston J.E."/>
            <person name="Durbin R.M."/>
            <person name="Hubbard T."/>
            <person name="Wooster R."/>
            <person name="Dunham I."/>
            <person name="Carter N.P."/>
            <person name="McVean G."/>
            <person name="Ross M.T."/>
            <person name="Harrow J."/>
            <person name="Olson M.V."/>
            <person name="Beck S."/>
            <person name="Rogers J."/>
            <person name="Bentley D.R."/>
        </authorList>
    </citation>
    <scope>NUCLEOTIDE SEQUENCE [LARGE SCALE GENOMIC DNA]</scope>
</reference>
<reference key="3">
    <citation type="submission" date="2005-09" db="EMBL/GenBank/DDBJ databases">
        <authorList>
            <person name="Mural R.J."/>
            <person name="Istrail S."/>
            <person name="Sutton G.G."/>
            <person name="Florea L."/>
            <person name="Halpern A.L."/>
            <person name="Mobarry C.M."/>
            <person name="Lippert R."/>
            <person name="Walenz B."/>
            <person name="Shatkay H."/>
            <person name="Dew I."/>
            <person name="Miller J.R."/>
            <person name="Flanigan M.J."/>
            <person name="Edwards N.J."/>
            <person name="Bolanos R."/>
            <person name="Fasulo D."/>
            <person name="Halldorsson B.V."/>
            <person name="Hannenhalli S."/>
            <person name="Turner R."/>
            <person name="Yooseph S."/>
            <person name="Lu F."/>
            <person name="Nusskern D.R."/>
            <person name="Shue B.C."/>
            <person name="Zheng X.H."/>
            <person name="Zhong F."/>
            <person name="Delcher A.L."/>
            <person name="Huson D.H."/>
            <person name="Kravitz S.A."/>
            <person name="Mouchard L."/>
            <person name="Reinert K."/>
            <person name="Remington K.A."/>
            <person name="Clark A.G."/>
            <person name="Waterman M.S."/>
            <person name="Eichler E.E."/>
            <person name="Adams M.D."/>
            <person name="Hunkapiller M.W."/>
            <person name="Myers E.W."/>
            <person name="Venter J.C."/>
        </authorList>
    </citation>
    <scope>NUCLEOTIDE SEQUENCE [LARGE SCALE GENOMIC DNA]</scope>
</reference>
<reference key="4">
    <citation type="journal article" date="2004" name="Genome Res.">
        <title>The status, quality, and expansion of the NIH full-length cDNA project: the Mammalian Gene Collection (MGC).</title>
        <authorList>
            <consortium name="The MGC Project Team"/>
        </authorList>
    </citation>
    <scope>NUCLEOTIDE SEQUENCE [LARGE SCALE MRNA]</scope>
    <source>
        <tissue>Testis</tissue>
    </source>
</reference>
<reference key="5">
    <citation type="journal article" date="2004" name="Proc. Natl. Acad. Sci. U.S.A.">
        <title>The human olfactory receptor gene family.</title>
        <authorList>
            <person name="Malnic B."/>
            <person name="Godfrey P.A."/>
            <person name="Buck L.B."/>
        </authorList>
    </citation>
    <scope>IDENTIFICATION</scope>
</reference>
<reference key="6">
    <citation type="journal article" date="2004" name="Proc. Natl. Acad. Sci. U.S.A.">
        <authorList>
            <person name="Malnic B."/>
            <person name="Godfrey P.A."/>
            <person name="Buck L.B."/>
        </authorList>
    </citation>
    <scope>ERRATUM OF PUBMED:14983052</scope>
</reference>
<organism>
    <name type="scientific">Homo sapiens</name>
    <name type="common">Human</name>
    <dbReference type="NCBI Taxonomy" id="9606"/>
    <lineage>
        <taxon>Eukaryota</taxon>
        <taxon>Metazoa</taxon>
        <taxon>Chordata</taxon>
        <taxon>Craniata</taxon>
        <taxon>Vertebrata</taxon>
        <taxon>Euteleostomi</taxon>
        <taxon>Mammalia</taxon>
        <taxon>Eutheria</taxon>
        <taxon>Euarchontoglires</taxon>
        <taxon>Primates</taxon>
        <taxon>Haplorrhini</taxon>
        <taxon>Catarrhini</taxon>
        <taxon>Hominidae</taxon>
        <taxon>Homo</taxon>
    </lineage>
</organism>
<comment type="function">
    <text evidence="3">Odorant receptor.</text>
</comment>
<comment type="subcellular location">
    <subcellularLocation>
        <location>Cell membrane</location>
        <topology>Multi-pass membrane protein</topology>
    </subcellularLocation>
</comment>
<comment type="similarity">
    <text evidence="2">Belongs to the G-protein coupled receptor 1 family.</text>
</comment>
<comment type="online information" name="Human Olfactory Receptor Data Exploratorium (HORDE)">
    <link uri="http://genome.weizmann.ac.il/horde/card/index/symbol:OR6K2"/>
</comment>
<proteinExistence type="evidence at transcript level"/>
<accession>Q8NGY2</accession>
<accession>B9EH33</accession>
<accession>Q6IFR6</accession>